<evidence type="ECO:0000255" key="1">
    <source>
        <dbReference type="HAMAP-Rule" id="MF_01008"/>
    </source>
</evidence>
<evidence type="ECO:0000255" key="2">
    <source>
        <dbReference type="PROSITE-ProRule" id="PRU01076"/>
    </source>
</evidence>
<evidence type="ECO:0000305" key="3"/>
<organism>
    <name type="scientific">Cutibacterium acnes (strain DSM 16379 / KPA171202)</name>
    <name type="common">Propionibacterium acnes</name>
    <dbReference type="NCBI Taxonomy" id="267747"/>
    <lineage>
        <taxon>Bacteria</taxon>
        <taxon>Bacillati</taxon>
        <taxon>Actinomycetota</taxon>
        <taxon>Actinomycetes</taxon>
        <taxon>Propionibacteriales</taxon>
        <taxon>Propionibacteriaceae</taxon>
        <taxon>Cutibacterium</taxon>
    </lineage>
</organism>
<accession>Q6A9R1</accession>
<proteinExistence type="inferred from homology"/>
<reference key="1">
    <citation type="journal article" date="2004" name="Science">
        <title>The complete genome sequence of Propionibacterium acnes, a commensal of human skin.</title>
        <authorList>
            <person name="Brueggemann H."/>
            <person name="Henne A."/>
            <person name="Hoster F."/>
            <person name="Liesegang H."/>
            <person name="Wiezer A."/>
            <person name="Strittmatter A."/>
            <person name="Hujer S."/>
            <person name="Duerre P."/>
            <person name="Gottschalk G."/>
        </authorList>
    </citation>
    <scope>NUCLEOTIDE SEQUENCE [LARGE SCALE GENOMIC DNA]</scope>
    <source>
        <strain>DSM 16379 / KPA171202</strain>
    </source>
</reference>
<feature type="chain" id="PRO_0000108520" description="Transcriptional regulator MraZ">
    <location>
        <begin position="1"/>
        <end position="142"/>
    </location>
</feature>
<feature type="domain" description="SpoVT-AbrB 1" evidence="2">
    <location>
        <begin position="5"/>
        <end position="47"/>
    </location>
</feature>
<feature type="domain" description="SpoVT-AbrB 2" evidence="2">
    <location>
        <begin position="76"/>
        <end position="119"/>
    </location>
</feature>
<protein>
    <recommendedName>
        <fullName>Transcriptional regulator MraZ</fullName>
    </recommendedName>
</protein>
<keyword id="KW-0963">Cytoplasm</keyword>
<keyword id="KW-0238">DNA-binding</keyword>
<keyword id="KW-0677">Repeat</keyword>
<keyword id="KW-0804">Transcription</keyword>
<keyword id="KW-0805">Transcription regulation</keyword>
<sequence>MFLGTHTPKLDEKGRFFLPAKFRDELDDGLVITRGQDRCLAIYPTETFVEMTREIAKGSVSVKKVRDYQRMLAAGASDTAPDKQGRVMIPPMLRRYAALNKEIVVVGAITRVEVWDATEWEKYSEAQEEAFADMNEEVFAEQ</sequence>
<comment type="subunit">
    <text evidence="1">Forms oligomers.</text>
</comment>
<comment type="subcellular location">
    <subcellularLocation>
        <location evidence="1">Cytoplasm</location>
        <location evidence="1">Nucleoid</location>
    </subcellularLocation>
</comment>
<comment type="similarity">
    <text evidence="1">Belongs to the MraZ family.</text>
</comment>
<comment type="sequence caution" evidence="3">
    <conflict type="erroneous initiation">
        <sequence resource="EMBL-CDS" id="AAT82505"/>
    </conflict>
</comment>
<name>MRAZ_CUTAK</name>
<gene>
    <name evidence="1" type="primary">mraZ</name>
    <name type="ordered locus">PPA0749</name>
</gene>
<dbReference type="EMBL" id="AE017283">
    <property type="protein sequence ID" value="AAT82505.1"/>
    <property type="status" value="ALT_INIT"/>
    <property type="molecule type" value="Genomic_DNA"/>
</dbReference>
<dbReference type="RefSeq" id="WP_002513933.1">
    <property type="nucleotide sequence ID" value="NZ_CP025935.1"/>
</dbReference>
<dbReference type="SMR" id="Q6A9R1"/>
<dbReference type="EnsemblBacteria" id="AAT82505">
    <property type="protein sequence ID" value="AAT82505"/>
    <property type="gene ID" value="PPA0749"/>
</dbReference>
<dbReference type="GeneID" id="92856735"/>
<dbReference type="KEGG" id="pac:PPA0749"/>
<dbReference type="eggNOG" id="COG2001">
    <property type="taxonomic scope" value="Bacteria"/>
</dbReference>
<dbReference type="HOGENOM" id="CLU_107907_0_5_11"/>
<dbReference type="Proteomes" id="UP000000603">
    <property type="component" value="Chromosome"/>
</dbReference>
<dbReference type="GO" id="GO:0005737">
    <property type="term" value="C:cytoplasm"/>
    <property type="evidence" value="ECO:0007669"/>
    <property type="project" value="UniProtKB-UniRule"/>
</dbReference>
<dbReference type="GO" id="GO:0009295">
    <property type="term" value="C:nucleoid"/>
    <property type="evidence" value="ECO:0007669"/>
    <property type="project" value="UniProtKB-SubCell"/>
</dbReference>
<dbReference type="GO" id="GO:0003700">
    <property type="term" value="F:DNA-binding transcription factor activity"/>
    <property type="evidence" value="ECO:0007669"/>
    <property type="project" value="UniProtKB-UniRule"/>
</dbReference>
<dbReference type="GO" id="GO:0000976">
    <property type="term" value="F:transcription cis-regulatory region binding"/>
    <property type="evidence" value="ECO:0007669"/>
    <property type="project" value="TreeGrafter"/>
</dbReference>
<dbReference type="GO" id="GO:2000143">
    <property type="term" value="P:negative regulation of DNA-templated transcription initiation"/>
    <property type="evidence" value="ECO:0007669"/>
    <property type="project" value="TreeGrafter"/>
</dbReference>
<dbReference type="CDD" id="cd16321">
    <property type="entry name" value="MraZ_C"/>
    <property type="match status" value="1"/>
</dbReference>
<dbReference type="CDD" id="cd16320">
    <property type="entry name" value="MraZ_N"/>
    <property type="match status" value="1"/>
</dbReference>
<dbReference type="Gene3D" id="3.40.1550.20">
    <property type="entry name" value="Transcriptional regulator MraZ domain"/>
    <property type="match status" value="1"/>
</dbReference>
<dbReference type="HAMAP" id="MF_01008">
    <property type="entry name" value="MraZ"/>
    <property type="match status" value="1"/>
</dbReference>
<dbReference type="InterPro" id="IPR003444">
    <property type="entry name" value="MraZ"/>
</dbReference>
<dbReference type="InterPro" id="IPR035644">
    <property type="entry name" value="MraZ_C"/>
</dbReference>
<dbReference type="InterPro" id="IPR020603">
    <property type="entry name" value="MraZ_dom"/>
</dbReference>
<dbReference type="InterPro" id="IPR035642">
    <property type="entry name" value="MraZ_N"/>
</dbReference>
<dbReference type="InterPro" id="IPR038619">
    <property type="entry name" value="MraZ_sf"/>
</dbReference>
<dbReference type="InterPro" id="IPR007159">
    <property type="entry name" value="SpoVT-AbrB_dom"/>
</dbReference>
<dbReference type="InterPro" id="IPR037914">
    <property type="entry name" value="SpoVT-AbrB_sf"/>
</dbReference>
<dbReference type="NCBIfam" id="TIGR00242">
    <property type="entry name" value="division/cell wall cluster transcriptional repressor MraZ"/>
    <property type="match status" value="1"/>
</dbReference>
<dbReference type="PANTHER" id="PTHR34701">
    <property type="entry name" value="TRANSCRIPTIONAL REGULATOR MRAZ"/>
    <property type="match status" value="1"/>
</dbReference>
<dbReference type="PANTHER" id="PTHR34701:SF1">
    <property type="entry name" value="TRANSCRIPTIONAL REGULATOR MRAZ"/>
    <property type="match status" value="1"/>
</dbReference>
<dbReference type="Pfam" id="PF02381">
    <property type="entry name" value="MraZ"/>
    <property type="match status" value="2"/>
</dbReference>
<dbReference type="SUPFAM" id="SSF89447">
    <property type="entry name" value="AbrB/MazE/MraZ-like"/>
    <property type="match status" value="1"/>
</dbReference>
<dbReference type="PROSITE" id="PS51740">
    <property type="entry name" value="SPOVT_ABRB"/>
    <property type="match status" value="2"/>
</dbReference>